<sequence length="335" mass="37001">MAGRRSSNVCPFPGNSGGGLEGPVPMRVDTPTWLSSQAATSRLMVRPGMGPGFCPGPEVWGVPLGPSPYEFRGGIAPYGAYETRTWSQNSSEDTYPGPYIALRYMPNLALPEDVSAIQKEMEQLAKELRQKRMTLGYSQADVGFAVGAMFGKVLSQTTICRFEAQQLSLANMWKLRPLLKMWLEEVDEKNLLGICRMEMILQQARKRRRASRERRIGSNLEKLFLQCPEPTPQQISYIAGRLRLQKDLVQVWFSNRSQMAGWPTNDSSQRENVGATGAPFPGPPVCFPLAPGLHFDFPHYGGSCLTPLYSSTPFPVRGALLSAPTTTLGLPRLSS</sequence>
<keyword id="KW-0217">Developmental protein</keyword>
<keyword id="KW-0221">Differentiation</keyword>
<keyword id="KW-0238">DNA-binding</keyword>
<keyword id="KW-0371">Homeobox</keyword>
<keyword id="KW-0469">Meiosis</keyword>
<keyword id="KW-0539">Nucleus</keyword>
<keyword id="KW-1185">Reference proteome</keyword>
<keyword id="KW-0744">Spermatogenesis</keyword>
<keyword id="KW-0804">Transcription</keyword>
<keyword id="KW-0805">Transcription regulation</keyword>
<feature type="chain" id="PRO_0000100758" description="POU domain, class 5, transcription factor 2">
    <location>
        <begin position="1"/>
        <end position="335"/>
    </location>
</feature>
<feature type="domain" description="POU-specific" evidence="2">
    <location>
        <begin position="113"/>
        <end position="187"/>
    </location>
</feature>
<feature type="DNA-binding region" description="Homeobox" evidence="1">
    <location>
        <begin position="205"/>
        <end position="264"/>
    </location>
</feature>
<feature type="region of interest" description="Disordered" evidence="3">
    <location>
        <begin position="1"/>
        <end position="23"/>
    </location>
</feature>
<feature type="sequence conflict" description="In Ref. 1; L23864." evidence="4" ref="1">
    <original>C</original>
    <variation>S</variation>
    <location>
        <position position="195"/>
    </location>
</feature>
<name>PO5F2_RAT</name>
<organism>
    <name type="scientific">Rattus norvegicus</name>
    <name type="common">Rat</name>
    <dbReference type="NCBI Taxonomy" id="10116"/>
    <lineage>
        <taxon>Eukaryota</taxon>
        <taxon>Metazoa</taxon>
        <taxon>Chordata</taxon>
        <taxon>Craniata</taxon>
        <taxon>Vertebrata</taxon>
        <taxon>Euteleostomi</taxon>
        <taxon>Mammalia</taxon>
        <taxon>Eutheria</taxon>
        <taxon>Euarchontoglires</taxon>
        <taxon>Glires</taxon>
        <taxon>Rodentia</taxon>
        <taxon>Myomorpha</taxon>
        <taxon>Muroidea</taxon>
        <taxon>Muridae</taxon>
        <taxon>Murinae</taxon>
        <taxon>Rattus</taxon>
    </lineage>
</organism>
<protein>
    <recommendedName>
        <fullName>POU domain, class 5, transcription factor 2</fullName>
    </recommendedName>
    <alternativeName>
        <fullName>Sperm 1 POU domain transcription factor</fullName>
        <shortName>SPRM-1</shortName>
    </alternativeName>
</protein>
<dbReference type="EMBL" id="L23864">
    <property type="status" value="NOT_ANNOTATED_CDS"/>
    <property type="molecule type" value="mRNA"/>
</dbReference>
<dbReference type="PIR" id="A49654">
    <property type="entry name" value="A49654"/>
</dbReference>
<dbReference type="RefSeq" id="NP_001075220.2">
    <property type="nucleotide sequence ID" value="NM_001081751.2"/>
</dbReference>
<dbReference type="SMR" id="P56225"/>
<dbReference type="FunCoup" id="P56225">
    <property type="interactions" value="2"/>
</dbReference>
<dbReference type="STRING" id="10116.ENSRNOP00000076140"/>
<dbReference type="GlyGen" id="P56225">
    <property type="glycosylation" value="1 site"/>
</dbReference>
<dbReference type="PhosphoSitePlus" id="P56225"/>
<dbReference type="GeneID" id="680620"/>
<dbReference type="UCSC" id="RGD:1589456">
    <property type="organism name" value="rat"/>
</dbReference>
<dbReference type="AGR" id="RGD:1589456"/>
<dbReference type="RGD" id="1589456">
    <property type="gene designation" value="Pou5f2"/>
</dbReference>
<dbReference type="InParanoid" id="P56225"/>
<dbReference type="PhylomeDB" id="P56225"/>
<dbReference type="PRO" id="PR:P56225"/>
<dbReference type="Proteomes" id="UP000002494">
    <property type="component" value="Chromosome 2"/>
</dbReference>
<dbReference type="Bgee" id="ENSRNOG00000062285">
    <property type="expression patterns" value="Expressed in testis"/>
</dbReference>
<dbReference type="GO" id="GO:0005634">
    <property type="term" value="C:nucleus"/>
    <property type="evidence" value="ECO:0007669"/>
    <property type="project" value="UniProtKB-SubCell"/>
</dbReference>
<dbReference type="GO" id="GO:0000981">
    <property type="term" value="F:DNA-binding transcription factor activity, RNA polymerase II-specific"/>
    <property type="evidence" value="ECO:0000318"/>
    <property type="project" value="GO_Central"/>
</dbReference>
<dbReference type="GO" id="GO:0000978">
    <property type="term" value="F:RNA polymerase II cis-regulatory region sequence-specific DNA binding"/>
    <property type="evidence" value="ECO:0000318"/>
    <property type="project" value="GO_Central"/>
</dbReference>
<dbReference type="GO" id="GO:0043565">
    <property type="term" value="F:sequence-specific DNA binding"/>
    <property type="evidence" value="ECO:0000266"/>
    <property type="project" value="RGD"/>
</dbReference>
<dbReference type="GO" id="GO:0030154">
    <property type="term" value="P:cell differentiation"/>
    <property type="evidence" value="ECO:0007669"/>
    <property type="project" value="UniProtKB-KW"/>
</dbReference>
<dbReference type="GO" id="GO:0051321">
    <property type="term" value="P:meiotic cell cycle"/>
    <property type="evidence" value="ECO:0007669"/>
    <property type="project" value="UniProtKB-KW"/>
</dbReference>
<dbReference type="GO" id="GO:0006357">
    <property type="term" value="P:regulation of transcription by RNA polymerase II"/>
    <property type="evidence" value="ECO:0000318"/>
    <property type="project" value="GO_Central"/>
</dbReference>
<dbReference type="GO" id="GO:0007283">
    <property type="term" value="P:spermatogenesis"/>
    <property type="evidence" value="ECO:0007669"/>
    <property type="project" value="UniProtKB-KW"/>
</dbReference>
<dbReference type="CDD" id="cd00086">
    <property type="entry name" value="homeodomain"/>
    <property type="match status" value="1"/>
</dbReference>
<dbReference type="FunFam" id="1.10.260.40:FF:000054">
    <property type="entry name" value="POU domain protein"/>
    <property type="match status" value="1"/>
</dbReference>
<dbReference type="Gene3D" id="1.10.10.60">
    <property type="entry name" value="Homeodomain-like"/>
    <property type="match status" value="1"/>
</dbReference>
<dbReference type="Gene3D" id="1.10.260.40">
    <property type="entry name" value="lambda repressor-like DNA-binding domains"/>
    <property type="match status" value="1"/>
</dbReference>
<dbReference type="InterPro" id="IPR001356">
    <property type="entry name" value="HD"/>
</dbReference>
<dbReference type="InterPro" id="IPR009057">
    <property type="entry name" value="Homeodomain-like_sf"/>
</dbReference>
<dbReference type="InterPro" id="IPR010982">
    <property type="entry name" value="Lambda_DNA-bd_dom_sf"/>
</dbReference>
<dbReference type="InterPro" id="IPR013847">
    <property type="entry name" value="POU"/>
</dbReference>
<dbReference type="InterPro" id="IPR000327">
    <property type="entry name" value="POU_dom"/>
</dbReference>
<dbReference type="InterPro" id="IPR050255">
    <property type="entry name" value="POU_domain_TF"/>
</dbReference>
<dbReference type="PANTHER" id="PTHR11636">
    <property type="entry name" value="POU DOMAIN"/>
    <property type="match status" value="1"/>
</dbReference>
<dbReference type="PANTHER" id="PTHR11636:SF14">
    <property type="entry name" value="POU DOMAIN, CLASS 5, TRANSCRIPTION FACTOR 2"/>
    <property type="match status" value="1"/>
</dbReference>
<dbReference type="Pfam" id="PF00046">
    <property type="entry name" value="Homeodomain"/>
    <property type="match status" value="1"/>
</dbReference>
<dbReference type="Pfam" id="PF00157">
    <property type="entry name" value="Pou"/>
    <property type="match status" value="1"/>
</dbReference>
<dbReference type="PRINTS" id="PR00028">
    <property type="entry name" value="POUDOMAIN"/>
</dbReference>
<dbReference type="SMART" id="SM00389">
    <property type="entry name" value="HOX"/>
    <property type="match status" value="1"/>
</dbReference>
<dbReference type="SMART" id="SM00352">
    <property type="entry name" value="POU"/>
    <property type="match status" value="1"/>
</dbReference>
<dbReference type="SUPFAM" id="SSF46689">
    <property type="entry name" value="Homeodomain-like"/>
    <property type="match status" value="1"/>
</dbReference>
<dbReference type="SUPFAM" id="SSF47413">
    <property type="entry name" value="lambda repressor-like DNA-binding domains"/>
    <property type="match status" value="1"/>
</dbReference>
<dbReference type="PROSITE" id="PS50071">
    <property type="entry name" value="HOMEOBOX_2"/>
    <property type="match status" value="1"/>
</dbReference>
<dbReference type="PROSITE" id="PS00035">
    <property type="entry name" value="POU_1"/>
    <property type="match status" value="1"/>
</dbReference>
<dbReference type="PROSITE" id="PS00465">
    <property type="entry name" value="POU_2"/>
    <property type="match status" value="1"/>
</dbReference>
<dbReference type="PROSITE" id="PS51179">
    <property type="entry name" value="POU_3"/>
    <property type="match status" value="1"/>
</dbReference>
<comment type="function">
    <text>Transcription factor that binds preferentially to the octamer motif (5'-ATGTTAAT-3'). May exert a regulatory function in meiotic events that are required for terminal differentiation of male germ cell.</text>
</comment>
<comment type="subcellular location">
    <subcellularLocation>
        <location>Nucleus</location>
    </subcellularLocation>
</comment>
<comment type="tissue specificity">
    <text>Highly restricted to adult testis.</text>
</comment>
<comment type="developmental stage">
    <text>Expressed transiently immediately prior to meiosis I during spermatogenesis in the male germ cell.</text>
</comment>
<comment type="similarity">
    <text evidence="4">Belongs to the POU transcription factor family. Class-5 subfamily.</text>
</comment>
<proteinExistence type="evidence at transcript level"/>
<accession>P56225</accession>
<reference key="1">
    <citation type="journal article" date="1993" name="Proc. Natl. Acad. Sci. U.S.A.">
        <title>Sperm 1: a POU-domain gene transiently expressed immediately before meiosis I in the male germ cell.</title>
        <authorList>
            <person name="Andersen B."/>
            <person name="Pearse R.V. II"/>
            <person name="Schlegel P.N."/>
            <person name="Cichon Z."/>
            <person name="Schonemann M.D."/>
            <person name="Bardin C.W."/>
            <person name="Rosenfeld M.G."/>
        </authorList>
    </citation>
    <scope>NUCLEOTIDE SEQUENCE [MRNA]</scope>
    <source>
        <strain>Fischer</strain>
        <tissue>Testis</tissue>
    </source>
</reference>
<reference key="2">
    <citation type="submission" date="1994-02" db="EMBL/GenBank/DDBJ databases">
        <authorList>
            <person name="Andersen B."/>
            <person name="Pearse R.V. II"/>
            <person name="Schlegel P.N."/>
            <person name="Cichon Z."/>
            <person name="Schonemann M.D."/>
            <person name="Bardin C.W."/>
            <person name="Rosenfeld M.G."/>
        </authorList>
    </citation>
    <scope>SEQUENCE REVISION TO 138; 282 AND 318</scope>
</reference>
<reference key="3">
    <citation type="journal article" date="2004" name="Nature">
        <title>Genome sequence of the Brown Norway rat yields insights into mammalian evolution.</title>
        <authorList>
            <person name="Gibbs R.A."/>
            <person name="Weinstock G.M."/>
            <person name="Metzker M.L."/>
            <person name="Muzny D.M."/>
            <person name="Sodergren E.J."/>
            <person name="Scherer S."/>
            <person name="Scott G."/>
            <person name="Steffen D."/>
            <person name="Worley K.C."/>
            <person name="Burch P.E."/>
            <person name="Okwuonu G."/>
            <person name="Hines S."/>
            <person name="Lewis L."/>
            <person name="Deramo C."/>
            <person name="Delgado O."/>
            <person name="Dugan-Rocha S."/>
            <person name="Miner G."/>
            <person name="Morgan M."/>
            <person name="Hawes A."/>
            <person name="Gill R."/>
            <person name="Holt R.A."/>
            <person name="Adams M.D."/>
            <person name="Amanatides P.G."/>
            <person name="Baden-Tillson H."/>
            <person name="Barnstead M."/>
            <person name="Chin S."/>
            <person name="Evans C.A."/>
            <person name="Ferriera S."/>
            <person name="Fosler C."/>
            <person name="Glodek A."/>
            <person name="Gu Z."/>
            <person name="Jennings D."/>
            <person name="Kraft C.L."/>
            <person name="Nguyen T."/>
            <person name="Pfannkoch C.M."/>
            <person name="Sitter C."/>
            <person name="Sutton G.G."/>
            <person name="Venter J.C."/>
            <person name="Woodage T."/>
            <person name="Smith D."/>
            <person name="Lee H.-M."/>
            <person name="Gustafson E."/>
            <person name="Cahill P."/>
            <person name="Kana A."/>
            <person name="Doucette-Stamm L."/>
            <person name="Weinstock K."/>
            <person name="Fechtel K."/>
            <person name="Weiss R.B."/>
            <person name="Dunn D.M."/>
            <person name="Green E.D."/>
            <person name="Blakesley R.W."/>
            <person name="Bouffard G.G."/>
            <person name="De Jong P.J."/>
            <person name="Osoegawa K."/>
            <person name="Zhu B."/>
            <person name="Marra M."/>
            <person name="Schein J."/>
            <person name="Bosdet I."/>
            <person name="Fjell C."/>
            <person name="Jones S."/>
            <person name="Krzywinski M."/>
            <person name="Mathewson C."/>
            <person name="Siddiqui A."/>
            <person name="Wye N."/>
            <person name="McPherson J."/>
            <person name="Zhao S."/>
            <person name="Fraser C.M."/>
            <person name="Shetty J."/>
            <person name="Shatsman S."/>
            <person name="Geer K."/>
            <person name="Chen Y."/>
            <person name="Abramzon S."/>
            <person name="Nierman W.C."/>
            <person name="Havlak P.H."/>
            <person name="Chen R."/>
            <person name="Durbin K.J."/>
            <person name="Egan A."/>
            <person name="Ren Y."/>
            <person name="Song X.-Z."/>
            <person name="Li B."/>
            <person name="Liu Y."/>
            <person name="Qin X."/>
            <person name="Cawley S."/>
            <person name="Cooney A.J."/>
            <person name="D'Souza L.M."/>
            <person name="Martin K."/>
            <person name="Wu J.Q."/>
            <person name="Gonzalez-Garay M.L."/>
            <person name="Jackson A.R."/>
            <person name="Kalafus K.J."/>
            <person name="McLeod M.P."/>
            <person name="Milosavljevic A."/>
            <person name="Virk D."/>
            <person name="Volkov A."/>
            <person name="Wheeler D.A."/>
            <person name="Zhang Z."/>
            <person name="Bailey J.A."/>
            <person name="Eichler E.E."/>
            <person name="Tuzun E."/>
            <person name="Birney E."/>
            <person name="Mongin E."/>
            <person name="Ureta-Vidal A."/>
            <person name="Woodwark C."/>
            <person name="Zdobnov E."/>
            <person name="Bork P."/>
            <person name="Suyama M."/>
            <person name="Torrents D."/>
            <person name="Alexandersson M."/>
            <person name="Trask B.J."/>
            <person name="Young J.M."/>
            <person name="Huang H."/>
            <person name="Wang H."/>
            <person name="Xing H."/>
            <person name="Daniels S."/>
            <person name="Gietzen D."/>
            <person name="Schmidt J."/>
            <person name="Stevens K."/>
            <person name="Vitt U."/>
            <person name="Wingrove J."/>
            <person name="Camara F."/>
            <person name="Mar Alba M."/>
            <person name="Abril J.F."/>
            <person name="Guigo R."/>
            <person name="Smit A."/>
            <person name="Dubchak I."/>
            <person name="Rubin E.M."/>
            <person name="Couronne O."/>
            <person name="Poliakov A."/>
            <person name="Huebner N."/>
            <person name="Ganten D."/>
            <person name="Goesele C."/>
            <person name="Hummel O."/>
            <person name="Kreitler T."/>
            <person name="Lee Y.-A."/>
            <person name="Monti J."/>
            <person name="Schulz H."/>
            <person name="Zimdahl H."/>
            <person name="Himmelbauer H."/>
            <person name="Lehrach H."/>
            <person name="Jacob H.J."/>
            <person name="Bromberg S."/>
            <person name="Gullings-Handley J."/>
            <person name="Jensen-Seaman M.I."/>
            <person name="Kwitek A.E."/>
            <person name="Lazar J."/>
            <person name="Pasko D."/>
            <person name="Tonellato P.J."/>
            <person name="Twigger S."/>
            <person name="Ponting C.P."/>
            <person name="Duarte J.M."/>
            <person name="Rice S."/>
            <person name="Goodstadt L."/>
            <person name="Beatson S.A."/>
            <person name="Emes R.D."/>
            <person name="Winter E.E."/>
            <person name="Webber C."/>
            <person name="Brandt P."/>
            <person name="Nyakatura G."/>
            <person name="Adetobi M."/>
            <person name="Chiaromonte F."/>
            <person name="Elnitski L."/>
            <person name="Eswara P."/>
            <person name="Hardison R.C."/>
            <person name="Hou M."/>
            <person name="Kolbe D."/>
            <person name="Makova K."/>
            <person name="Miller W."/>
            <person name="Nekrutenko A."/>
            <person name="Riemer C."/>
            <person name="Schwartz S."/>
            <person name="Taylor J."/>
            <person name="Yang S."/>
            <person name="Zhang Y."/>
            <person name="Lindpaintner K."/>
            <person name="Andrews T.D."/>
            <person name="Caccamo M."/>
            <person name="Clamp M."/>
            <person name="Clarke L."/>
            <person name="Curwen V."/>
            <person name="Durbin R.M."/>
            <person name="Eyras E."/>
            <person name="Searle S.M."/>
            <person name="Cooper G.M."/>
            <person name="Batzoglou S."/>
            <person name="Brudno M."/>
            <person name="Sidow A."/>
            <person name="Stone E.A."/>
            <person name="Payseur B.A."/>
            <person name="Bourque G."/>
            <person name="Lopez-Otin C."/>
            <person name="Puente X.S."/>
            <person name="Chakrabarti K."/>
            <person name="Chatterji S."/>
            <person name="Dewey C."/>
            <person name="Pachter L."/>
            <person name="Bray N."/>
            <person name="Yap V.B."/>
            <person name="Caspi A."/>
            <person name="Tesler G."/>
            <person name="Pevzner P.A."/>
            <person name="Haussler D."/>
            <person name="Roskin K.M."/>
            <person name="Baertsch R."/>
            <person name="Clawson H."/>
            <person name="Furey T.S."/>
            <person name="Hinrichs A.S."/>
            <person name="Karolchik D."/>
            <person name="Kent W.J."/>
            <person name="Rosenbloom K.R."/>
            <person name="Trumbower H."/>
            <person name="Weirauch M."/>
            <person name="Cooper D.N."/>
            <person name="Stenson P.D."/>
            <person name="Ma B."/>
            <person name="Brent M."/>
            <person name="Arumugam M."/>
            <person name="Shteynberg D."/>
            <person name="Copley R.R."/>
            <person name="Taylor M.S."/>
            <person name="Riethman H."/>
            <person name="Mudunuri U."/>
            <person name="Peterson J."/>
            <person name="Guyer M."/>
            <person name="Felsenfeld A."/>
            <person name="Old S."/>
            <person name="Mockrin S."/>
            <person name="Collins F.S."/>
        </authorList>
    </citation>
    <scope>NUCLEOTIDE SEQUENCE [LARGE SCALE GENOMIC DNA]</scope>
    <source>
        <strain>Brown Norway</strain>
    </source>
</reference>
<gene>
    <name type="primary">Pou5f2</name>
    <name type="synonym">Sprm1</name>
</gene>
<evidence type="ECO:0000255" key="1">
    <source>
        <dbReference type="PROSITE-ProRule" id="PRU00108"/>
    </source>
</evidence>
<evidence type="ECO:0000255" key="2">
    <source>
        <dbReference type="PROSITE-ProRule" id="PRU00530"/>
    </source>
</evidence>
<evidence type="ECO:0000256" key="3">
    <source>
        <dbReference type="SAM" id="MobiDB-lite"/>
    </source>
</evidence>
<evidence type="ECO:0000305" key="4"/>